<proteinExistence type="inferred from homology"/>
<accession>Q9HT13</accession>
<feature type="chain" id="PRO_0000287746" description="ATP synthase protein I">
    <location>
        <begin position="1"/>
        <end position="126"/>
    </location>
</feature>
<feature type="transmembrane region" description="Helical" evidence="2">
    <location>
        <begin position="10"/>
        <end position="30"/>
    </location>
</feature>
<feature type="transmembrane region" description="Helical" evidence="2">
    <location>
        <begin position="32"/>
        <end position="52"/>
    </location>
</feature>
<feature type="transmembrane region" description="Helical" evidence="2">
    <location>
        <begin position="71"/>
        <end position="93"/>
    </location>
</feature>
<feature type="transmembrane region" description="Helical" evidence="2">
    <location>
        <begin position="98"/>
        <end position="120"/>
    </location>
</feature>
<sequence>MPSRLPAFRLLLVQLVVVLVAAISLWISWGPVAGYSGLLGGMIAWLPNCYFAYKAFRFSGARAAREIVRSFYAGEAGKLILTAVLFALAFAGVKPLMAPALFGVYLLTLMVSWCAPLLMGKTFTRP</sequence>
<reference key="1">
    <citation type="journal article" date="2000" name="Nature">
        <title>Complete genome sequence of Pseudomonas aeruginosa PAO1, an opportunistic pathogen.</title>
        <authorList>
            <person name="Stover C.K."/>
            <person name="Pham X.-Q.T."/>
            <person name="Erwin A.L."/>
            <person name="Mizoguchi S.D."/>
            <person name="Warrener P."/>
            <person name="Hickey M.J."/>
            <person name="Brinkman F.S.L."/>
            <person name="Hufnagle W.O."/>
            <person name="Kowalik D.J."/>
            <person name="Lagrou M."/>
            <person name="Garber R.L."/>
            <person name="Goltry L."/>
            <person name="Tolentino E."/>
            <person name="Westbrock-Wadman S."/>
            <person name="Yuan Y."/>
            <person name="Brody L.L."/>
            <person name="Coulter S.N."/>
            <person name="Folger K.R."/>
            <person name="Kas A."/>
            <person name="Larbig K."/>
            <person name="Lim R.M."/>
            <person name="Smith K.A."/>
            <person name="Spencer D.H."/>
            <person name="Wong G.K.-S."/>
            <person name="Wu Z."/>
            <person name="Paulsen I.T."/>
            <person name="Reizer J."/>
            <person name="Saier M.H. Jr."/>
            <person name="Hancock R.E.W."/>
            <person name="Lory S."/>
            <person name="Olson M.V."/>
        </authorList>
    </citation>
    <scope>NUCLEOTIDE SEQUENCE [LARGE SCALE GENOMIC DNA]</scope>
    <source>
        <strain>ATCC 15692 / DSM 22644 / CIP 104116 / JCM 14847 / LMG 12228 / 1C / PRS 101 / PAO1</strain>
    </source>
</reference>
<organism>
    <name type="scientific">Pseudomonas aeruginosa (strain ATCC 15692 / DSM 22644 / CIP 104116 / JCM 14847 / LMG 12228 / 1C / PRS 101 / PAO1)</name>
    <dbReference type="NCBI Taxonomy" id="208964"/>
    <lineage>
        <taxon>Bacteria</taxon>
        <taxon>Pseudomonadati</taxon>
        <taxon>Pseudomonadota</taxon>
        <taxon>Gammaproteobacteria</taxon>
        <taxon>Pseudomonadales</taxon>
        <taxon>Pseudomonadaceae</taxon>
        <taxon>Pseudomonas</taxon>
    </lineage>
</organism>
<comment type="function">
    <text evidence="1">A possible function for this protein is to guide the assembly of the membrane sector of the ATPase enzyme complex.</text>
</comment>
<comment type="subcellular location">
    <subcellularLocation>
        <location evidence="3">Cell inner membrane</location>
        <topology evidence="3">Multi-pass membrane protein</topology>
    </subcellularLocation>
</comment>
<comment type="similarity">
    <text evidence="3">Belongs to the bacterial AtpI family.</text>
</comment>
<dbReference type="EMBL" id="AE004091">
    <property type="protein sequence ID" value="AAG08946.1"/>
    <property type="molecule type" value="Genomic_DNA"/>
</dbReference>
<dbReference type="PIR" id="B82953">
    <property type="entry name" value="B82953"/>
</dbReference>
<dbReference type="RefSeq" id="NP_254248.1">
    <property type="nucleotide sequence ID" value="NC_002516.2"/>
</dbReference>
<dbReference type="RefSeq" id="WP_003097239.1">
    <property type="nucleotide sequence ID" value="NZ_QZGE01000012.1"/>
</dbReference>
<dbReference type="FunCoup" id="Q9HT13">
    <property type="interactions" value="40"/>
</dbReference>
<dbReference type="STRING" id="208964.PA5561"/>
<dbReference type="PaxDb" id="208964-PA5561"/>
<dbReference type="DNASU" id="878128"/>
<dbReference type="GeneID" id="878128"/>
<dbReference type="KEGG" id="pae:PA5561"/>
<dbReference type="PATRIC" id="fig|208964.12.peg.5827"/>
<dbReference type="PseudoCAP" id="PA5561"/>
<dbReference type="HOGENOM" id="CLU_121415_3_2_6"/>
<dbReference type="InParanoid" id="Q9HT13"/>
<dbReference type="OrthoDB" id="5702716at2"/>
<dbReference type="PhylomeDB" id="Q9HT13"/>
<dbReference type="BioCyc" id="PAER208964:G1FZ6-5688-MONOMER"/>
<dbReference type="Proteomes" id="UP000002438">
    <property type="component" value="Chromosome"/>
</dbReference>
<dbReference type="GO" id="GO:0005886">
    <property type="term" value="C:plasma membrane"/>
    <property type="evidence" value="ECO:0007669"/>
    <property type="project" value="UniProtKB-SubCell"/>
</dbReference>
<dbReference type="GO" id="GO:0045259">
    <property type="term" value="C:proton-transporting ATP synthase complex"/>
    <property type="evidence" value="ECO:0007669"/>
    <property type="project" value="UniProtKB-KW"/>
</dbReference>
<dbReference type="GO" id="GO:1902600">
    <property type="term" value="P:proton transmembrane transport"/>
    <property type="evidence" value="ECO:0007669"/>
    <property type="project" value="UniProtKB-KW"/>
</dbReference>
<dbReference type="InterPro" id="IPR005598">
    <property type="entry name" value="ATP_synth_I"/>
</dbReference>
<dbReference type="NCBIfam" id="NF004414">
    <property type="entry name" value="PRK05760.1"/>
    <property type="match status" value="1"/>
</dbReference>
<dbReference type="Pfam" id="PF03899">
    <property type="entry name" value="ATP-synt_I"/>
    <property type="match status" value="1"/>
</dbReference>
<keyword id="KW-0997">Cell inner membrane</keyword>
<keyword id="KW-1003">Cell membrane</keyword>
<keyword id="KW-0138">CF(0)</keyword>
<keyword id="KW-0375">Hydrogen ion transport</keyword>
<keyword id="KW-0406">Ion transport</keyword>
<keyword id="KW-0472">Membrane</keyword>
<keyword id="KW-1185">Reference proteome</keyword>
<keyword id="KW-0812">Transmembrane</keyword>
<keyword id="KW-1133">Transmembrane helix</keyword>
<keyword id="KW-0813">Transport</keyword>
<evidence type="ECO:0000250" key="1"/>
<evidence type="ECO:0000255" key="2"/>
<evidence type="ECO:0000305" key="3"/>
<name>ATPZ_PSEAE</name>
<gene>
    <name type="primary">atpI</name>
    <name type="ordered locus">PA5561</name>
</gene>
<protein>
    <recommendedName>
        <fullName>ATP synthase protein I</fullName>
    </recommendedName>
</protein>